<protein>
    <recommendedName>
        <fullName evidence="1">Aspartate/glutamate leucyltransferase</fullName>
        <ecNumber evidence="1">2.3.2.29</ecNumber>
    </recommendedName>
</protein>
<proteinExistence type="inferred from homology"/>
<dbReference type="EC" id="2.3.2.29" evidence="1"/>
<dbReference type="EMBL" id="CP000738">
    <property type="protein sequence ID" value="ABR59666.1"/>
    <property type="molecule type" value="Genomic_DNA"/>
</dbReference>
<dbReference type="RefSeq" id="WP_011975007.1">
    <property type="nucleotide sequence ID" value="NC_009636.1"/>
</dbReference>
<dbReference type="RefSeq" id="YP_001326501.1">
    <property type="nucleotide sequence ID" value="NC_009636.1"/>
</dbReference>
<dbReference type="SMR" id="A6U7N6"/>
<dbReference type="STRING" id="366394.Smed_0810"/>
<dbReference type="KEGG" id="smd:Smed_0810"/>
<dbReference type="PATRIC" id="fig|366394.8.peg.3924"/>
<dbReference type="eggNOG" id="COG2935">
    <property type="taxonomic scope" value="Bacteria"/>
</dbReference>
<dbReference type="HOGENOM" id="CLU_077607_1_0_5"/>
<dbReference type="OrthoDB" id="9782022at2"/>
<dbReference type="Proteomes" id="UP000001108">
    <property type="component" value="Chromosome"/>
</dbReference>
<dbReference type="GO" id="GO:0005737">
    <property type="term" value="C:cytoplasm"/>
    <property type="evidence" value="ECO:0007669"/>
    <property type="project" value="UniProtKB-SubCell"/>
</dbReference>
<dbReference type="GO" id="GO:0004057">
    <property type="term" value="F:arginyl-tRNA--protein transferase activity"/>
    <property type="evidence" value="ECO:0007669"/>
    <property type="project" value="InterPro"/>
</dbReference>
<dbReference type="GO" id="GO:0008914">
    <property type="term" value="F:leucyl-tRNA--protein transferase activity"/>
    <property type="evidence" value="ECO:0007669"/>
    <property type="project" value="UniProtKB-UniRule"/>
</dbReference>
<dbReference type="GO" id="GO:0071596">
    <property type="term" value="P:ubiquitin-dependent protein catabolic process via the N-end rule pathway"/>
    <property type="evidence" value="ECO:0007669"/>
    <property type="project" value="InterPro"/>
</dbReference>
<dbReference type="HAMAP" id="MF_00689">
    <property type="entry name" value="Bpt"/>
    <property type="match status" value="1"/>
</dbReference>
<dbReference type="InterPro" id="IPR016181">
    <property type="entry name" value="Acyl_CoA_acyltransferase"/>
</dbReference>
<dbReference type="InterPro" id="IPR017138">
    <property type="entry name" value="Asp_Glu_LeuTrfase"/>
</dbReference>
<dbReference type="InterPro" id="IPR030700">
    <property type="entry name" value="N-end_Aminoacyl_Trfase"/>
</dbReference>
<dbReference type="InterPro" id="IPR007472">
    <property type="entry name" value="N-end_Aminoacyl_Trfase_C"/>
</dbReference>
<dbReference type="InterPro" id="IPR007471">
    <property type="entry name" value="N-end_Aminoacyl_Trfase_N"/>
</dbReference>
<dbReference type="NCBIfam" id="NF002342">
    <property type="entry name" value="PRK01305.1-3"/>
    <property type="match status" value="1"/>
</dbReference>
<dbReference type="NCBIfam" id="NF002343">
    <property type="entry name" value="PRK01305.1-4"/>
    <property type="match status" value="1"/>
</dbReference>
<dbReference type="NCBIfam" id="NF002346">
    <property type="entry name" value="PRK01305.2-3"/>
    <property type="match status" value="1"/>
</dbReference>
<dbReference type="PANTHER" id="PTHR21367">
    <property type="entry name" value="ARGININE-TRNA-PROTEIN TRANSFERASE 1"/>
    <property type="match status" value="1"/>
</dbReference>
<dbReference type="PANTHER" id="PTHR21367:SF1">
    <property type="entry name" value="ARGINYL-TRNA--PROTEIN TRANSFERASE 1"/>
    <property type="match status" value="1"/>
</dbReference>
<dbReference type="Pfam" id="PF04377">
    <property type="entry name" value="ATE_C"/>
    <property type="match status" value="1"/>
</dbReference>
<dbReference type="Pfam" id="PF04376">
    <property type="entry name" value="ATE_N"/>
    <property type="match status" value="1"/>
</dbReference>
<dbReference type="PIRSF" id="PIRSF037208">
    <property type="entry name" value="ATE_pro_prd"/>
    <property type="match status" value="1"/>
</dbReference>
<dbReference type="SUPFAM" id="SSF55729">
    <property type="entry name" value="Acyl-CoA N-acyltransferases (Nat)"/>
    <property type="match status" value="1"/>
</dbReference>
<name>BPT_SINMW</name>
<comment type="function">
    <text evidence="1">Functions in the N-end rule pathway of protein degradation where it conjugates Leu from its aminoacyl-tRNA to the N-termini of proteins containing an N-terminal aspartate or glutamate.</text>
</comment>
<comment type="catalytic activity">
    <reaction evidence="1">
        <text>N-terminal L-glutamyl-[protein] + L-leucyl-tRNA(Leu) = N-terminal L-leucyl-L-glutamyl-[protein] + tRNA(Leu) + H(+)</text>
        <dbReference type="Rhea" id="RHEA:50412"/>
        <dbReference type="Rhea" id="RHEA-COMP:9613"/>
        <dbReference type="Rhea" id="RHEA-COMP:9622"/>
        <dbReference type="Rhea" id="RHEA-COMP:12664"/>
        <dbReference type="Rhea" id="RHEA-COMP:12668"/>
        <dbReference type="ChEBI" id="CHEBI:15378"/>
        <dbReference type="ChEBI" id="CHEBI:64721"/>
        <dbReference type="ChEBI" id="CHEBI:78442"/>
        <dbReference type="ChEBI" id="CHEBI:78494"/>
        <dbReference type="ChEBI" id="CHEBI:133041"/>
        <dbReference type="EC" id="2.3.2.29"/>
    </reaction>
</comment>
<comment type="catalytic activity">
    <reaction evidence="1">
        <text>N-terminal L-aspartyl-[protein] + L-leucyl-tRNA(Leu) = N-terminal L-leucyl-L-aspartyl-[protein] + tRNA(Leu) + H(+)</text>
        <dbReference type="Rhea" id="RHEA:50420"/>
        <dbReference type="Rhea" id="RHEA-COMP:9613"/>
        <dbReference type="Rhea" id="RHEA-COMP:9622"/>
        <dbReference type="Rhea" id="RHEA-COMP:12669"/>
        <dbReference type="Rhea" id="RHEA-COMP:12674"/>
        <dbReference type="ChEBI" id="CHEBI:15378"/>
        <dbReference type="ChEBI" id="CHEBI:64720"/>
        <dbReference type="ChEBI" id="CHEBI:78442"/>
        <dbReference type="ChEBI" id="CHEBI:78494"/>
        <dbReference type="ChEBI" id="CHEBI:133042"/>
        <dbReference type="EC" id="2.3.2.29"/>
    </reaction>
</comment>
<comment type="subcellular location">
    <subcellularLocation>
        <location evidence="1">Cytoplasm</location>
    </subcellularLocation>
</comment>
<comment type="similarity">
    <text evidence="1">Belongs to the R-transferase family. Bpt subfamily.</text>
</comment>
<feature type="chain" id="PRO_1000045152" description="Aspartate/glutamate leucyltransferase">
    <location>
        <begin position="1"/>
        <end position="259"/>
    </location>
</feature>
<reference key="1">
    <citation type="submission" date="2007-06" db="EMBL/GenBank/DDBJ databases">
        <title>Complete sequence of Sinorhizobium medicae WSM419 chromosome.</title>
        <authorList>
            <consortium name="US DOE Joint Genome Institute"/>
            <person name="Copeland A."/>
            <person name="Lucas S."/>
            <person name="Lapidus A."/>
            <person name="Barry K."/>
            <person name="Glavina del Rio T."/>
            <person name="Dalin E."/>
            <person name="Tice H."/>
            <person name="Pitluck S."/>
            <person name="Chain P."/>
            <person name="Malfatti S."/>
            <person name="Shin M."/>
            <person name="Vergez L."/>
            <person name="Schmutz J."/>
            <person name="Larimer F."/>
            <person name="Land M."/>
            <person name="Hauser L."/>
            <person name="Kyrpides N."/>
            <person name="Mikhailova N."/>
            <person name="Reeve W.G."/>
            <person name="Richardson P."/>
        </authorList>
    </citation>
    <scope>NUCLEOTIDE SEQUENCE [LARGE SCALE GENOMIC DNA]</scope>
    <source>
        <strain>WSM419</strain>
    </source>
</reference>
<organism>
    <name type="scientific">Sinorhizobium medicae (strain WSM419)</name>
    <name type="common">Ensifer medicae</name>
    <dbReference type="NCBI Taxonomy" id="366394"/>
    <lineage>
        <taxon>Bacteria</taxon>
        <taxon>Pseudomonadati</taxon>
        <taxon>Pseudomonadota</taxon>
        <taxon>Alphaproteobacteria</taxon>
        <taxon>Hyphomicrobiales</taxon>
        <taxon>Rhizobiaceae</taxon>
        <taxon>Sinorhizobium/Ensifer group</taxon>
        <taxon>Sinorhizobium</taxon>
    </lineage>
</organism>
<gene>
    <name evidence="1" type="primary">bpt</name>
    <name type="ordered locus">Smed_0810</name>
</gene>
<keyword id="KW-0012">Acyltransferase</keyword>
<keyword id="KW-0963">Cytoplasm</keyword>
<keyword id="KW-0808">Transferase</keyword>
<accession>A6U7N6</accession>
<sequence>MNTQTAPSPQFYLTAPAACPYLPGQMERKVFTHMVGERAPELNDLLTQGGFRRSQNIAYRPACETCRACISVRILANEFAPTKSMRRVLAANGDIVSAEYPAEPSSEQYNLFRRYLDCRHQKGGMSDMSVLDYAMMVEDTHVHTKIIEYRLRVEGDGINDKARGPLIATALTDRMSDGLSMVYSFFDPALSERSLGTYMILDHIRRAKERGLPHVYLGYWVKGSRKMGYKTKFLPQEHLMARGWERYSVDHDSIKPATD</sequence>
<evidence type="ECO:0000255" key="1">
    <source>
        <dbReference type="HAMAP-Rule" id="MF_00689"/>
    </source>
</evidence>